<sequence>MIFSLYLIVAISLADLTAAQQECDCKNRFCFPNVVANWIGAAEYCSRNGWRLAILDTEEKQQQVEEQAQKVDAFKTNKVELWIGASDLAKEGKFVWHGTGIDVSYEKWIAGMPDNRNGNEHCVHLWYEPSRSFQWQWNDVVCSSTRRFVCERM</sequence>
<organism evidence="7">
    <name type="scientific">Aedes albopictus</name>
    <name type="common">Asian tiger mosquito</name>
    <name type="synonym">Stegomyia albopicta</name>
    <dbReference type="NCBI Taxonomy" id="7160"/>
    <lineage>
        <taxon>Eukaryota</taxon>
        <taxon>Metazoa</taxon>
        <taxon>Ecdysozoa</taxon>
        <taxon>Arthropoda</taxon>
        <taxon>Hexapoda</taxon>
        <taxon>Insecta</taxon>
        <taxon>Pterygota</taxon>
        <taxon>Neoptera</taxon>
        <taxon>Endopterygota</taxon>
        <taxon>Diptera</taxon>
        <taxon>Nematocera</taxon>
        <taxon>Culicoidea</taxon>
        <taxon>Culicidae</taxon>
        <taxon>Culicinae</taxon>
        <taxon>Aedini</taxon>
        <taxon>Aedes</taxon>
        <taxon>Stegomyia</taxon>
    </lineage>
</organism>
<protein>
    <recommendedName>
        <fullName evidence="6">Salivary C-type lectin 1</fullName>
        <shortName evidence="5">Aalb_CTL1</shortName>
    </recommendedName>
</protein>
<accession>Q5MIZ0</accession>
<proteinExistence type="evidence at transcript level"/>
<name>CTL1_AEDAL</name>
<dbReference type="EMBL" id="AY826070">
    <property type="protein sequence ID" value="AAV90642.1"/>
    <property type="molecule type" value="mRNA"/>
</dbReference>
<dbReference type="SMR" id="Q5MIZ0"/>
<dbReference type="VEuPathDB" id="VectorBase:AALC636_020303"/>
<dbReference type="VEuPathDB" id="VectorBase:AALF006736"/>
<dbReference type="VEuPathDB" id="VectorBase:AALFPA_040829"/>
<dbReference type="Proteomes" id="UP000069940">
    <property type="component" value="Unplaced"/>
</dbReference>
<dbReference type="GO" id="GO:0005576">
    <property type="term" value="C:extracellular region"/>
    <property type="evidence" value="ECO:0007669"/>
    <property type="project" value="UniProtKB-SubCell"/>
</dbReference>
<dbReference type="GO" id="GO:0030246">
    <property type="term" value="F:carbohydrate binding"/>
    <property type="evidence" value="ECO:0007669"/>
    <property type="project" value="UniProtKB-KW"/>
</dbReference>
<dbReference type="Gene3D" id="3.10.100.10">
    <property type="entry name" value="Mannose-Binding Protein A, subunit A"/>
    <property type="match status" value="1"/>
</dbReference>
<dbReference type="InterPro" id="IPR001304">
    <property type="entry name" value="C-type_lectin-like"/>
</dbReference>
<dbReference type="InterPro" id="IPR016186">
    <property type="entry name" value="C-type_lectin-like/link_sf"/>
</dbReference>
<dbReference type="InterPro" id="IPR050111">
    <property type="entry name" value="C-type_lectin/snaclec_domain"/>
</dbReference>
<dbReference type="InterPro" id="IPR016187">
    <property type="entry name" value="CTDL_fold"/>
</dbReference>
<dbReference type="PANTHER" id="PTHR22803">
    <property type="entry name" value="MANNOSE, PHOSPHOLIPASE, LECTIN RECEPTOR RELATED"/>
    <property type="match status" value="1"/>
</dbReference>
<dbReference type="Pfam" id="PF00059">
    <property type="entry name" value="Lectin_C"/>
    <property type="match status" value="1"/>
</dbReference>
<dbReference type="SMART" id="SM00034">
    <property type="entry name" value="CLECT"/>
    <property type="match status" value="1"/>
</dbReference>
<dbReference type="SUPFAM" id="SSF56436">
    <property type="entry name" value="C-type lectin-like"/>
    <property type="match status" value="1"/>
</dbReference>
<dbReference type="PROSITE" id="PS50041">
    <property type="entry name" value="C_TYPE_LECTIN_2"/>
    <property type="match status" value="1"/>
</dbReference>
<reference evidence="7" key="1">
    <citation type="journal article" date="2007" name="Insect Biochem. Mol. Biol.">
        <title>An insight into the sialome of the adult female mosquito Aedes albopictus.</title>
        <authorList>
            <person name="Arca B."/>
            <person name="Lombardo F."/>
            <person name="Francischetti I.M."/>
            <person name="Pham V.M."/>
            <person name="Mestres-Simon M."/>
            <person name="Andersen J.F."/>
            <person name="Ribeiro J.M."/>
        </authorList>
    </citation>
    <scope>NUCLEOTIDE SEQUENCE [LARGE SCALE MRNA]</scope>
    <scope>TISSUE SPECIFICITY</scope>
    <source>
        <tissue evidence="7">Salivary gland</tissue>
    </source>
</reference>
<reference evidence="6" key="2">
    <citation type="journal article" date="2014" name="Parasit. Vectors">
        <title>Cloning and characterization of a mannose binding C-type lectin gene from salivary gland of Aedes albopictus.</title>
        <authorList>
            <person name="Cheng J."/>
            <person name="Wang Y."/>
            <person name="Li F."/>
            <person name="Liu J."/>
            <person name="Sun Y."/>
            <person name="Wu J."/>
        </authorList>
    </citation>
    <scope>FUNCTION</scope>
    <scope>FUNCTION (MICROBIAL INFECTION)</scope>
    <scope>COFACTOR</scope>
    <scope>TISSUE SPECIFICITY</scope>
    <scope>INDUCTION</scope>
</reference>
<feature type="signal peptide" evidence="1">
    <location>
        <begin position="1"/>
        <end position="19"/>
    </location>
</feature>
<feature type="chain" id="PRO_5004259903" description="Salivary C-type lectin 1" evidence="1">
    <location>
        <begin position="20"/>
        <end position="153"/>
    </location>
</feature>
<feature type="domain" description="C-type lectin" evidence="2">
    <location>
        <begin position="26"/>
        <end position="151"/>
    </location>
</feature>
<feature type="disulfide bond" evidence="2">
    <location>
        <begin position="45"/>
        <end position="150"/>
    </location>
</feature>
<feature type="disulfide bond" evidence="2">
    <location>
        <begin position="122"/>
        <end position="142"/>
    </location>
</feature>
<keyword id="KW-1015">Disulfide bond</keyword>
<keyword id="KW-0430">Lectin</keyword>
<keyword id="KW-0964">Secreted</keyword>
<keyword id="KW-0732">Signal</keyword>
<evidence type="ECO:0000255" key="1"/>
<evidence type="ECO:0000255" key="2">
    <source>
        <dbReference type="PROSITE-ProRule" id="PRU00040"/>
    </source>
</evidence>
<evidence type="ECO:0000269" key="3">
    <source>
    </source>
</evidence>
<evidence type="ECO:0000269" key="4">
    <source>
    </source>
</evidence>
<evidence type="ECO:0000303" key="5">
    <source>
    </source>
</evidence>
<evidence type="ECO:0000305" key="6"/>
<evidence type="ECO:0000312" key="7">
    <source>
        <dbReference type="EMBL" id="AAV90642.1"/>
    </source>
</evidence>
<comment type="function">
    <text evidence="4 5">Salivary protein with carbohydrate-binding activity; exibits high affinity for D-mannose (PubMed:25051984). Agglutinates host erythrocytes (PubMed:25051984). Probably participates in mosquito innate immune responses to prevent microorganism multiplication in sugar and blood meals (PubMed:25051984).</text>
</comment>
<comment type="function">
    <text evidence="4">(Microbial infection) Agglutinates Staphylococcus aureus in vitro.</text>
</comment>
<comment type="function">
    <text evidence="4">(Microbial infection) Agglutinates Candida albicans in vitro.</text>
</comment>
<comment type="function">
    <text evidence="4">(Microbial infection) Does not agglutinate Escherichia coli in vitro.</text>
</comment>
<comment type="cofactor">
    <cofactor evidence="4">
        <name>Ca(2+)</name>
        <dbReference type="ChEBI" id="CHEBI:29108"/>
    </cofactor>
</comment>
<comment type="subcellular location">
    <subcellularLocation>
        <location evidence="6">Secreted</location>
    </subcellularLocation>
</comment>
<comment type="tissue specificity">
    <text evidence="3 4">Expressed in female salivary gland (PubMed:17244540, PubMed:25051984). Not detected or low-level expression in female midgut and fat body (PubMed:25051984).</text>
</comment>
<comment type="induction">
    <text evidence="4">Down-regulated after blood feeding.</text>
</comment>